<reference key="1">
    <citation type="journal article" date="2006" name="Chem. Biol. Drug Des.">
        <title>Identification and molecular diversity of T-superfamily conotoxins from Conus lividus and Conus litteratus.</title>
        <authorList>
            <person name="Luo S."/>
            <person name="Zhangsun D."/>
            <person name="Wu Y."/>
            <person name="Zhu X."/>
            <person name="Xie L."/>
            <person name="Hu Y."/>
            <person name="Zhang J."/>
            <person name="Zhao X."/>
        </authorList>
    </citation>
    <scope>NUCLEOTIDE SEQUENCE [MRNA]</scope>
    <source>
        <tissue>Venom duct</tissue>
    </source>
</reference>
<organism>
    <name type="scientific">Conus lividus</name>
    <name type="common">Livid cone</name>
    <dbReference type="NCBI Taxonomy" id="89426"/>
    <lineage>
        <taxon>Eukaryota</taxon>
        <taxon>Metazoa</taxon>
        <taxon>Spiralia</taxon>
        <taxon>Lophotrochozoa</taxon>
        <taxon>Mollusca</taxon>
        <taxon>Gastropoda</taxon>
        <taxon>Caenogastropoda</taxon>
        <taxon>Neogastropoda</taxon>
        <taxon>Conoidea</taxon>
        <taxon>Conidae</taxon>
        <taxon>Conus</taxon>
        <taxon>Lividoconus</taxon>
    </lineage>
</organism>
<sequence>MRCVPVFIILLLLSPSAPSVDAHPKTKDDVPLASFHDDAKRTLQRLWIKALCCYGYRFCCPNFR</sequence>
<name>CT121_CONLI</name>
<evidence type="ECO:0000250" key="1"/>
<evidence type="ECO:0000255" key="2"/>
<evidence type="ECO:0000303" key="3">
    <source>
    </source>
</evidence>
<evidence type="ECO:0000305" key="4"/>
<evidence type="ECO:0000305" key="5">
    <source>
    </source>
</evidence>
<protein>
    <recommendedName>
        <fullName evidence="3">Conotoxin LiC121</fullName>
    </recommendedName>
</protein>
<keyword id="KW-0165">Cleavage on pair of basic residues</keyword>
<keyword id="KW-1015">Disulfide bond</keyword>
<keyword id="KW-0964">Secreted</keyword>
<keyword id="KW-0732">Signal</keyword>
<keyword id="KW-0800">Toxin</keyword>
<proteinExistence type="inferred from homology"/>
<dbReference type="EMBL" id="DQ141144">
    <property type="protein sequence ID" value="AAZ85409.1"/>
    <property type="molecule type" value="mRNA"/>
</dbReference>
<dbReference type="ConoServer" id="1681">
    <property type="toxin name" value="LiC121 precursor"/>
</dbReference>
<dbReference type="GO" id="GO:0005576">
    <property type="term" value="C:extracellular region"/>
    <property type="evidence" value="ECO:0007669"/>
    <property type="project" value="UniProtKB-SubCell"/>
</dbReference>
<dbReference type="GO" id="GO:0090729">
    <property type="term" value="F:toxin activity"/>
    <property type="evidence" value="ECO:0007669"/>
    <property type="project" value="UniProtKB-KW"/>
</dbReference>
<dbReference type="InterPro" id="IPR031565">
    <property type="entry name" value="T-conotoxin"/>
</dbReference>
<dbReference type="Pfam" id="PF16981">
    <property type="entry name" value="Chi-conotoxin"/>
    <property type="match status" value="1"/>
</dbReference>
<comment type="subcellular location">
    <subcellularLocation>
        <location evidence="5">Secreted</location>
    </subcellularLocation>
</comment>
<comment type="tissue specificity">
    <text evidence="5">Expressed by the venom duct.</text>
</comment>
<comment type="domain">
    <text evidence="4">The cysteine framework is V (CC-CC).</text>
</comment>
<comment type="PTM">
    <text evidence="4">Contains 2 disulfide bonds that can be either 'C1-C3, C2-C4' or 'C1-C4, C2-C3', since these disulfide connectivities have been observed for conotoxins with cysteine framework V (for examples, see AC P0DQQ7 and AC P81755).</text>
</comment>
<comment type="similarity">
    <text evidence="4">Belongs to the conotoxin T superfamily.</text>
</comment>
<accession>Q3YEG9</accession>
<feature type="signal peptide" evidence="2">
    <location>
        <begin position="1"/>
        <end position="22"/>
    </location>
</feature>
<feature type="propeptide" id="PRO_0000274062" evidence="1">
    <location>
        <begin position="23"/>
        <end position="48"/>
    </location>
</feature>
<feature type="peptide" id="PRO_0000274063" description="Conotoxin LiC121">
    <location>
        <begin position="50"/>
        <end position="64"/>
    </location>
</feature>